<dbReference type="EMBL" id="AE017226">
    <property type="protein sequence ID" value="AAS12189.1"/>
    <property type="molecule type" value="Genomic_DNA"/>
</dbReference>
<dbReference type="RefSeq" id="NP_972278.1">
    <property type="nucleotide sequence ID" value="NC_002967.9"/>
</dbReference>
<dbReference type="RefSeq" id="WP_002679368.1">
    <property type="nucleotide sequence ID" value="NC_002967.9"/>
</dbReference>
<dbReference type="SMR" id="Q73M37"/>
<dbReference type="STRING" id="243275.TDE_1673"/>
<dbReference type="PaxDb" id="243275-TDE_1673"/>
<dbReference type="GeneID" id="2740128"/>
<dbReference type="KEGG" id="tde:TDE_1673"/>
<dbReference type="PATRIC" id="fig|243275.7.peg.1599"/>
<dbReference type="eggNOG" id="COG1219">
    <property type="taxonomic scope" value="Bacteria"/>
</dbReference>
<dbReference type="HOGENOM" id="CLU_014218_8_2_12"/>
<dbReference type="OrthoDB" id="9804062at2"/>
<dbReference type="Proteomes" id="UP000008212">
    <property type="component" value="Chromosome"/>
</dbReference>
<dbReference type="GO" id="GO:0009376">
    <property type="term" value="C:HslUV protease complex"/>
    <property type="evidence" value="ECO:0007669"/>
    <property type="project" value="TreeGrafter"/>
</dbReference>
<dbReference type="GO" id="GO:0005524">
    <property type="term" value="F:ATP binding"/>
    <property type="evidence" value="ECO:0007669"/>
    <property type="project" value="UniProtKB-UniRule"/>
</dbReference>
<dbReference type="GO" id="GO:0016887">
    <property type="term" value="F:ATP hydrolysis activity"/>
    <property type="evidence" value="ECO:0007669"/>
    <property type="project" value="InterPro"/>
</dbReference>
<dbReference type="GO" id="GO:0140662">
    <property type="term" value="F:ATP-dependent protein folding chaperone"/>
    <property type="evidence" value="ECO:0007669"/>
    <property type="project" value="InterPro"/>
</dbReference>
<dbReference type="GO" id="GO:0046983">
    <property type="term" value="F:protein dimerization activity"/>
    <property type="evidence" value="ECO:0007669"/>
    <property type="project" value="InterPro"/>
</dbReference>
<dbReference type="GO" id="GO:0051082">
    <property type="term" value="F:unfolded protein binding"/>
    <property type="evidence" value="ECO:0007669"/>
    <property type="project" value="UniProtKB-UniRule"/>
</dbReference>
<dbReference type="GO" id="GO:0008270">
    <property type="term" value="F:zinc ion binding"/>
    <property type="evidence" value="ECO:0007669"/>
    <property type="project" value="InterPro"/>
</dbReference>
<dbReference type="GO" id="GO:0051301">
    <property type="term" value="P:cell division"/>
    <property type="evidence" value="ECO:0007669"/>
    <property type="project" value="TreeGrafter"/>
</dbReference>
<dbReference type="GO" id="GO:0051603">
    <property type="term" value="P:proteolysis involved in protein catabolic process"/>
    <property type="evidence" value="ECO:0007669"/>
    <property type="project" value="TreeGrafter"/>
</dbReference>
<dbReference type="CDD" id="cd19497">
    <property type="entry name" value="RecA-like_ClpX"/>
    <property type="match status" value="1"/>
</dbReference>
<dbReference type="FunFam" id="1.10.8.60:FF:000002">
    <property type="entry name" value="ATP-dependent Clp protease ATP-binding subunit ClpX"/>
    <property type="match status" value="1"/>
</dbReference>
<dbReference type="FunFam" id="3.40.50.300:FF:000005">
    <property type="entry name" value="ATP-dependent Clp protease ATP-binding subunit ClpX"/>
    <property type="match status" value="1"/>
</dbReference>
<dbReference type="Gene3D" id="1.10.8.60">
    <property type="match status" value="1"/>
</dbReference>
<dbReference type="Gene3D" id="6.20.220.10">
    <property type="entry name" value="ClpX chaperone, C4-type zinc finger domain"/>
    <property type="match status" value="1"/>
</dbReference>
<dbReference type="Gene3D" id="3.40.50.300">
    <property type="entry name" value="P-loop containing nucleotide triphosphate hydrolases"/>
    <property type="match status" value="1"/>
</dbReference>
<dbReference type="HAMAP" id="MF_00175">
    <property type="entry name" value="ClpX"/>
    <property type="match status" value="1"/>
</dbReference>
<dbReference type="InterPro" id="IPR003593">
    <property type="entry name" value="AAA+_ATPase"/>
</dbReference>
<dbReference type="InterPro" id="IPR050052">
    <property type="entry name" value="ATP-dep_Clp_protease_ClpX"/>
</dbReference>
<dbReference type="InterPro" id="IPR003959">
    <property type="entry name" value="ATPase_AAA_core"/>
</dbReference>
<dbReference type="InterPro" id="IPR019489">
    <property type="entry name" value="Clp_ATPase_C"/>
</dbReference>
<dbReference type="InterPro" id="IPR004487">
    <property type="entry name" value="Clp_protease_ATP-bd_su_ClpX"/>
</dbReference>
<dbReference type="InterPro" id="IPR001270">
    <property type="entry name" value="ClpA/B"/>
</dbReference>
<dbReference type="InterPro" id="IPR046425">
    <property type="entry name" value="ClpX_bact"/>
</dbReference>
<dbReference type="InterPro" id="IPR027417">
    <property type="entry name" value="P-loop_NTPase"/>
</dbReference>
<dbReference type="InterPro" id="IPR010603">
    <property type="entry name" value="Znf_CppX_C4"/>
</dbReference>
<dbReference type="InterPro" id="IPR038366">
    <property type="entry name" value="Znf_CppX_C4_sf"/>
</dbReference>
<dbReference type="NCBIfam" id="TIGR00382">
    <property type="entry name" value="clpX"/>
    <property type="match status" value="1"/>
</dbReference>
<dbReference type="NCBIfam" id="NF003745">
    <property type="entry name" value="PRK05342.1"/>
    <property type="match status" value="1"/>
</dbReference>
<dbReference type="PANTHER" id="PTHR48102:SF7">
    <property type="entry name" value="ATP-DEPENDENT CLP PROTEASE ATP-BINDING SUBUNIT CLPX-LIKE, MITOCHONDRIAL"/>
    <property type="match status" value="1"/>
</dbReference>
<dbReference type="PANTHER" id="PTHR48102">
    <property type="entry name" value="ATP-DEPENDENT CLP PROTEASE ATP-BINDING SUBUNIT CLPX-LIKE, MITOCHONDRIAL-RELATED"/>
    <property type="match status" value="1"/>
</dbReference>
<dbReference type="Pfam" id="PF07724">
    <property type="entry name" value="AAA_2"/>
    <property type="match status" value="1"/>
</dbReference>
<dbReference type="Pfam" id="PF10431">
    <property type="entry name" value="ClpB_D2-small"/>
    <property type="match status" value="1"/>
</dbReference>
<dbReference type="Pfam" id="PF06689">
    <property type="entry name" value="zf-C4_ClpX"/>
    <property type="match status" value="1"/>
</dbReference>
<dbReference type="PRINTS" id="PR00300">
    <property type="entry name" value="CLPPROTEASEA"/>
</dbReference>
<dbReference type="SMART" id="SM00382">
    <property type="entry name" value="AAA"/>
    <property type="match status" value="1"/>
</dbReference>
<dbReference type="SMART" id="SM01086">
    <property type="entry name" value="ClpB_D2-small"/>
    <property type="match status" value="1"/>
</dbReference>
<dbReference type="SMART" id="SM00994">
    <property type="entry name" value="zf-C4_ClpX"/>
    <property type="match status" value="1"/>
</dbReference>
<dbReference type="SUPFAM" id="SSF57716">
    <property type="entry name" value="Glucocorticoid receptor-like (DNA-binding domain)"/>
    <property type="match status" value="1"/>
</dbReference>
<dbReference type="SUPFAM" id="SSF52540">
    <property type="entry name" value="P-loop containing nucleoside triphosphate hydrolases"/>
    <property type="match status" value="1"/>
</dbReference>
<dbReference type="PROSITE" id="PS51902">
    <property type="entry name" value="CLPX_ZB"/>
    <property type="match status" value="1"/>
</dbReference>
<reference key="1">
    <citation type="journal article" date="2004" name="Proc. Natl. Acad. Sci. U.S.A.">
        <title>Comparison of the genome of the oral pathogen Treponema denticola with other spirochete genomes.</title>
        <authorList>
            <person name="Seshadri R."/>
            <person name="Myers G.S.A."/>
            <person name="Tettelin H."/>
            <person name="Eisen J.A."/>
            <person name="Heidelberg J.F."/>
            <person name="Dodson R.J."/>
            <person name="Davidsen T.M."/>
            <person name="DeBoy R.T."/>
            <person name="Fouts D.E."/>
            <person name="Haft D.H."/>
            <person name="Selengut J."/>
            <person name="Ren Q."/>
            <person name="Brinkac L.M."/>
            <person name="Madupu R."/>
            <person name="Kolonay J.F."/>
            <person name="Durkin S.A."/>
            <person name="Daugherty S.C."/>
            <person name="Shetty J."/>
            <person name="Shvartsbeyn A."/>
            <person name="Gebregeorgis E."/>
            <person name="Geer K."/>
            <person name="Tsegaye G."/>
            <person name="Malek J.A."/>
            <person name="Ayodeji B."/>
            <person name="Shatsman S."/>
            <person name="McLeod M.P."/>
            <person name="Smajs D."/>
            <person name="Howell J.K."/>
            <person name="Pal S."/>
            <person name="Amin A."/>
            <person name="Vashisth P."/>
            <person name="McNeill T.Z."/>
            <person name="Xiang Q."/>
            <person name="Sodergren E."/>
            <person name="Baca E."/>
            <person name="Weinstock G.M."/>
            <person name="Norris S.J."/>
            <person name="Fraser C.M."/>
            <person name="Paulsen I.T."/>
        </authorList>
    </citation>
    <scope>NUCLEOTIDE SEQUENCE [LARGE SCALE GENOMIC DNA]</scope>
    <source>
        <strain>ATCC 35405 / DSM 14222 / CIP 103919 / JCM 8153 / KCTC 15104</strain>
    </source>
</reference>
<accession>Q73M37</accession>
<gene>
    <name evidence="1" type="primary">clpX</name>
    <name type="ordered locus">TDE_1673</name>
</gene>
<sequence length="415" mass="45548">MARNRMGGALICSFCNKPESSERFVVPGPGGIAICDRCVDLCESYIKSYKTVRPVDRSGAIPTPQELKEYLDEYVIGQEQAKRVLSVAVYNHYKRIMNPPLENDVVIEKSNVLLLGPTGSGKTLLAKTLAQKMQVPFAIADATTLTEAGYVGEDVENILLKLIQNANGDIKEAEMGIIFIDEIDKISRKSENVSITRDVSGEGVQQALLKIIEGTSASVPPQGGRKHPNQDMLKIDTTNILFICGGAFVGLDKIVEARISTKPIGFGAEVKKLSEKNLTELYDQVSPDDLVKFGLIPELIGRIPIKVALNELTKEDLTRILVEPKNAIIKQFQATFKLDNVDLHFDKDAITAIAQQAIDQNTGARGLRSIVEKLMLDAMFEAPSIKGRKELIINKKMIGNSSSKPKIKLLDEKTA</sequence>
<protein>
    <recommendedName>
        <fullName evidence="1">ATP-dependent Clp protease ATP-binding subunit ClpX</fullName>
    </recommendedName>
</protein>
<keyword id="KW-0067">ATP-binding</keyword>
<keyword id="KW-0143">Chaperone</keyword>
<keyword id="KW-0479">Metal-binding</keyword>
<keyword id="KW-0547">Nucleotide-binding</keyword>
<keyword id="KW-1185">Reference proteome</keyword>
<keyword id="KW-0862">Zinc</keyword>
<proteinExistence type="inferred from homology"/>
<feature type="chain" id="PRO_0000160447" description="ATP-dependent Clp protease ATP-binding subunit ClpX">
    <location>
        <begin position="1"/>
        <end position="415"/>
    </location>
</feature>
<feature type="domain" description="ClpX-type ZB" evidence="2">
    <location>
        <begin position="1"/>
        <end position="54"/>
    </location>
</feature>
<feature type="binding site" evidence="2">
    <location>
        <position position="12"/>
    </location>
    <ligand>
        <name>Zn(2+)</name>
        <dbReference type="ChEBI" id="CHEBI:29105"/>
    </ligand>
</feature>
<feature type="binding site" evidence="2">
    <location>
        <position position="15"/>
    </location>
    <ligand>
        <name>Zn(2+)</name>
        <dbReference type="ChEBI" id="CHEBI:29105"/>
    </ligand>
</feature>
<feature type="binding site" evidence="2">
    <location>
        <position position="35"/>
    </location>
    <ligand>
        <name>Zn(2+)</name>
        <dbReference type="ChEBI" id="CHEBI:29105"/>
    </ligand>
</feature>
<feature type="binding site" evidence="2">
    <location>
        <position position="38"/>
    </location>
    <ligand>
        <name>Zn(2+)</name>
        <dbReference type="ChEBI" id="CHEBI:29105"/>
    </ligand>
</feature>
<feature type="binding site" evidence="1">
    <location>
        <begin position="117"/>
        <end position="124"/>
    </location>
    <ligand>
        <name>ATP</name>
        <dbReference type="ChEBI" id="CHEBI:30616"/>
    </ligand>
</feature>
<name>CLPX_TREDE</name>
<comment type="function">
    <text evidence="1">ATP-dependent specificity component of the Clp protease. It directs the protease to specific substrates. Can perform chaperone functions in the absence of ClpP.</text>
</comment>
<comment type="subunit">
    <text evidence="1">Component of the ClpX-ClpP complex. Forms a hexameric ring that, in the presence of ATP, binds to fourteen ClpP subunits assembled into a disk-like structure with a central cavity, resembling the structure of eukaryotic proteasomes.</text>
</comment>
<comment type="similarity">
    <text evidence="1">Belongs to the ClpX chaperone family.</text>
</comment>
<evidence type="ECO:0000255" key="1">
    <source>
        <dbReference type="HAMAP-Rule" id="MF_00175"/>
    </source>
</evidence>
<evidence type="ECO:0000255" key="2">
    <source>
        <dbReference type="PROSITE-ProRule" id="PRU01250"/>
    </source>
</evidence>
<organism>
    <name type="scientific">Treponema denticola (strain ATCC 35405 / DSM 14222 / CIP 103919 / JCM 8153 / KCTC 15104)</name>
    <dbReference type="NCBI Taxonomy" id="243275"/>
    <lineage>
        <taxon>Bacteria</taxon>
        <taxon>Pseudomonadati</taxon>
        <taxon>Spirochaetota</taxon>
        <taxon>Spirochaetia</taxon>
        <taxon>Spirochaetales</taxon>
        <taxon>Treponemataceae</taxon>
        <taxon>Treponema</taxon>
    </lineage>
</organism>